<protein>
    <recommendedName>
        <fullName evidence="1">Peptide chain release factor 1</fullName>
        <shortName evidence="1">RF-1</shortName>
    </recommendedName>
</protein>
<sequence>MLNKLESAKDHYIRLEEQLSDPDIIGDQQRFRKLNKEYSDLKEIVQAYDRYISNRRQIEEVLGMLAKESDPEMKALAEEEYNELLADQPELEQQLKLLLLPKDEADSRNVIMEIRAGTGGDEAALFATDLLRMYQRFAERRGWKCELLEFNEANTPGACKEASMAISGHDVYGIMKFESGVHRVQRVPETETQGRIHTSAASVAVLPEAEEVDIEIRKDDLRVDTFRSGGKGGQNVNKVETAVRITHAPSGIVVACQEERSQLQNRERAMKMLRAKLYDRELADKNKERADLRKSMVSSGDRSAKIRTYNFPQSRVTDHRIGYTSHALPQILDGNLDDLIEALKLYEQTARLQEQQQ</sequence>
<evidence type="ECO:0000255" key="1">
    <source>
        <dbReference type="HAMAP-Rule" id="MF_00093"/>
    </source>
</evidence>
<name>RF1_PROA2</name>
<proteinExistence type="inferred from homology"/>
<organism>
    <name type="scientific">Prosthecochloris aestuarii (strain DSM 271 / SK 413)</name>
    <dbReference type="NCBI Taxonomy" id="290512"/>
    <lineage>
        <taxon>Bacteria</taxon>
        <taxon>Pseudomonadati</taxon>
        <taxon>Chlorobiota</taxon>
        <taxon>Chlorobiia</taxon>
        <taxon>Chlorobiales</taxon>
        <taxon>Chlorobiaceae</taxon>
        <taxon>Prosthecochloris</taxon>
    </lineage>
</organism>
<keyword id="KW-0963">Cytoplasm</keyword>
<keyword id="KW-0488">Methylation</keyword>
<keyword id="KW-0648">Protein biosynthesis</keyword>
<gene>
    <name evidence="1" type="primary">prfA</name>
    <name type="ordered locus">Paes_0119</name>
</gene>
<feature type="chain" id="PRO_1000093485" description="Peptide chain release factor 1">
    <location>
        <begin position="1"/>
        <end position="357"/>
    </location>
</feature>
<feature type="modified residue" description="N5-methylglutamine" evidence="1">
    <location>
        <position position="234"/>
    </location>
</feature>
<reference key="1">
    <citation type="submission" date="2008-06" db="EMBL/GenBank/DDBJ databases">
        <title>Complete sequence of chromosome of Prosthecochloris aestuarii DSM 271.</title>
        <authorList>
            <consortium name="US DOE Joint Genome Institute"/>
            <person name="Lucas S."/>
            <person name="Copeland A."/>
            <person name="Lapidus A."/>
            <person name="Glavina del Rio T."/>
            <person name="Dalin E."/>
            <person name="Tice H."/>
            <person name="Bruce D."/>
            <person name="Goodwin L."/>
            <person name="Pitluck S."/>
            <person name="Schmutz J."/>
            <person name="Larimer F."/>
            <person name="Land M."/>
            <person name="Hauser L."/>
            <person name="Kyrpides N."/>
            <person name="Anderson I."/>
            <person name="Liu Z."/>
            <person name="Li T."/>
            <person name="Zhao F."/>
            <person name="Overmann J."/>
            <person name="Bryant D.A."/>
            <person name="Richardson P."/>
        </authorList>
    </citation>
    <scope>NUCLEOTIDE SEQUENCE [LARGE SCALE GENOMIC DNA]</scope>
    <source>
        <strain>DSM 271 / SK 413</strain>
    </source>
</reference>
<comment type="function">
    <text evidence="1">Peptide chain release factor 1 directs the termination of translation in response to the peptide chain termination codons UAG and UAA.</text>
</comment>
<comment type="subcellular location">
    <subcellularLocation>
        <location evidence="1">Cytoplasm</location>
    </subcellularLocation>
</comment>
<comment type="PTM">
    <text evidence="1">Methylated by PrmC. Methylation increases the termination efficiency of RF1.</text>
</comment>
<comment type="similarity">
    <text evidence="1">Belongs to the prokaryotic/mitochondrial release factor family.</text>
</comment>
<dbReference type="EMBL" id="CP001108">
    <property type="protein sequence ID" value="ACF45179.1"/>
    <property type="molecule type" value="Genomic_DNA"/>
</dbReference>
<dbReference type="RefSeq" id="WP_012504716.1">
    <property type="nucleotide sequence ID" value="NC_011059.1"/>
</dbReference>
<dbReference type="SMR" id="B4S385"/>
<dbReference type="STRING" id="290512.Paes_0119"/>
<dbReference type="KEGG" id="paa:Paes_0119"/>
<dbReference type="eggNOG" id="COG0216">
    <property type="taxonomic scope" value="Bacteria"/>
</dbReference>
<dbReference type="HOGENOM" id="CLU_036856_0_1_10"/>
<dbReference type="Proteomes" id="UP000002725">
    <property type="component" value="Chromosome"/>
</dbReference>
<dbReference type="GO" id="GO:0005737">
    <property type="term" value="C:cytoplasm"/>
    <property type="evidence" value="ECO:0007669"/>
    <property type="project" value="UniProtKB-SubCell"/>
</dbReference>
<dbReference type="GO" id="GO:0016149">
    <property type="term" value="F:translation release factor activity, codon specific"/>
    <property type="evidence" value="ECO:0007669"/>
    <property type="project" value="UniProtKB-UniRule"/>
</dbReference>
<dbReference type="FunFam" id="3.30.160.20:FF:000004">
    <property type="entry name" value="Peptide chain release factor 1"/>
    <property type="match status" value="1"/>
</dbReference>
<dbReference type="FunFam" id="3.30.70.1660:FF:000002">
    <property type="entry name" value="Peptide chain release factor 1"/>
    <property type="match status" value="1"/>
</dbReference>
<dbReference type="Gene3D" id="3.30.160.20">
    <property type="match status" value="1"/>
</dbReference>
<dbReference type="Gene3D" id="3.30.70.1660">
    <property type="match status" value="2"/>
</dbReference>
<dbReference type="Gene3D" id="6.10.140.1950">
    <property type="match status" value="1"/>
</dbReference>
<dbReference type="HAMAP" id="MF_00093">
    <property type="entry name" value="Rel_fac_1"/>
    <property type="match status" value="1"/>
</dbReference>
<dbReference type="InterPro" id="IPR005139">
    <property type="entry name" value="PCRF"/>
</dbReference>
<dbReference type="InterPro" id="IPR000352">
    <property type="entry name" value="Pep_chain_release_fac_I"/>
</dbReference>
<dbReference type="InterPro" id="IPR045853">
    <property type="entry name" value="Pep_chain_release_fac_I_sf"/>
</dbReference>
<dbReference type="InterPro" id="IPR050057">
    <property type="entry name" value="Prokaryotic/Mito_RF"/>
</dbReference>
<dbReference type="InterPro" id="IPR004373">
    <property type="entry name" value="RF-1"/>
</dbReference>
<dbReference type="NCBIfam" id="TIGR00019">
    <property type="entry name" value="prfA"/>
    <property type="match status" value="1"/>
</dbReference>
<dbReference type="NCBIfam" id="NF001859">
    <property type="entry name" value="PRK00591.1"/>
    <property type="match status" value="1"/>
</dbReference>
<dbReference type="PANTHER" id="PTHR43804">
    <property type="entry name" value="LD18447P"/>
    <property type="match status" value="1"/>
</dbReference>
<dbReference type="PANTHER" id="PTHR43804:SF7">
    <property type="entry name" value="LD18447P"/>
    <property type="match status" value="1"/>
</dbReference>
<dbReference type="Pfam" id="PF03462">
    <property type="entry name" value="PCRF"/>
    <property type="match status" value="1"/>
</dbReference>
<dbReference type="Pfam" id="PF00472">
    <property type="entry name" value="RF-1"/>
    <property type="match status" value="1"/>
</dbReference>
<dbReference type="SMART" id="SM00937">
    <property type="entry name" value="PCRF"/>
    <property type="match status" value="1"/>
</dbReference>
<dbReference type="SUPFAM" id="SSF75620">
    <property type="entry name" value="Release factor"/>
    <property type="match status" value="1"/>
</dbReference>
<dbReference type="PROSITE" id="PS00745">
    <property type="entry name" value="RF_PROK_I"/>
    <property type="match status" value="1"/>
</dbReference>
<accession>B4S385</accession>